<gene>
    <name evidence="1" type="primary">maeA</name>
    <name type="ordered locus">Psyr_1561</name>
</gene>
<evidence type="ECO:0000255" key="1">
    <source>
        <dbReference type="HAMAP-Rule" id="MF_01619"/>
    </source>
</evidence>
<evidence type="ECO:0000305" key="2"/>
<comment type="catalytic activity">
    <reaction evidence="1">
        <text>(S)-malate + NAD(+) = pyruvate + CO2 + NADH</text>
        <dbReference type="Rhea" id="RHEA:12653"/>
        <dbReference type="ChEBI" id="CHEBI:15361"/>
        <dbReference type="ChEBI" id="CHEBI:15589"/>
        <dbReference type="ChEBI" id="CHEBI:16526"/>
        <dbReference type="ChEBI" id="CHEBI:57540"/>
        <dbReference type="ChEBI" id="CHEBI:57945"/>
        <dbReference type="EC" id="1.1.1.38"/>
    </reaction>
</comment>
<comment type="catalytic activity">
    <reaction evidence="1">
        <text>oxaloacetate + H(+) = pyruvate + CO2</text>
        <dbReference type="Rhea" id="RHEA:15641"/>
        <dbReference type="ChEBI" id="CHEBI:15361"/>
        <dbReference type="ChEBI" id="CHEBI:15378"/>
        <dbReference type="ChEBI" id="CHEBI:16452"/>
        <dbReference type="ChEBI" id="CHEBI:16526"/>
        <dbReference type="EC" id="1.1.1.38"/>
    </reaction>
</comment>
<comment type="cofactor">
    <cofactor evidence="1">
        <name>Mg(2+)</name>
        <dbReference type="ChEBI" id="CHEBI:18420"/>
    </cofactor>
    <cofactor evidence="1">
        <name>Mn(2+)</name>
        <dbReference type="ChEBI" id="CHEBI:29035"/>
    </cofactor>
    <text evidence="1">Divalent metal cations. Prefers magnesium or manganese.</text>
</comment>
<comment type="subunit">
    <text evidence="1">Homotetramer.</text>
</comment>
<comment type="similarity">
    <text evidence="1">Belongs to the malic enzymes family.</text>
</comment>
<comment type="sequence caution" evidence="2">
    <conflict type="erroneous initiation">
        <sequence resource="EMBL-CDS" id="AAY36609"/>
    </conflict>
</comment>
<proteinExistence type="inferred from homology"/>
<protein>
    <recommendedName>
        <fullName evidence="1">NAD-dependent malic enzyme</fullName>
        <shortName evidence="1">NAD-ME</shortName>
        <ecNumber evidence="1">1.1.1.38</ecNumber>
    </recommendedName>
</protein>
<keyword id="KW-0479">Metal-binding</keyword>
<keyword id="KW-0520">NAD</keyword>
<keyword id="KW-0560">Oxidoreductase</keyword>
<reference key="1">
    <citation type="journal article" date="2005" name="Proc. Natl. Acad. Sci. U.S.A.">
        <title>Comparison of the complete genome sequences of Pseudomonas syringae pv. syringae B728a and pv. tomato DC3000.</title>
        <authorList>
            <person name="Feil H."/>
            <person name="Feil W.S."/>
            <person name="Chain P."/>
            <person name="Larimer F."/>
            <person name="Dibartolo G."/>
            <person name="Copeland A."/>
            <person name="Lykidis A."/>
            <person name="Trong S."/>
            <person name="Nolan M."/>
            <person name="Goltsman E."/>
            <person name="Thiel J."/>
            <person name="Malfatti S."/>
            <person name="Loper J.E."/>
            <person name="Lapidus A."/>
            <person name="Detter J.C."/>
            <person name="Land M."/>
            <person name="Richardson P.M."/>
            <person name="Kyrpides N.C."/>
            <person name="Ivanova N."/>
            <person name="Lindow S.E."/>
        </authorList>
    </citation>
    <scope>NUCLEOTIDE SEQUENCE [LARGE SCALE GENOMIC DNA]</scope>
    <source>
        <strain>B728a</strain>
    </source>
</reference>
<accession>Q4ZW63</accession>
<name>MAO1_PSEU2</name>
<organism>
    <name type="scientific">Pseudomonas syringae pv. syringae (strain B728a)</name>
    <dbReference type="NCBI Taxonomy" id="205918"/>
    <lineage>
        <taxon>Bacteria</taxon>
        <taxon>Pseudomonadati</taxon>
        <taxon>Pseudomonadota</taxon>
        <taxon>Gammaproteobacteria</taxon>
        <taxon>Pseudomonadales</taxon>
        <taxon>Pseudomonadaceae</taxon>
        <taxon>Pseudomonas</taxon>
        <taxon>Pseudomonas syringae</taxon>
    </lineage>
</organism>
<feature type="chain" id="PRO_0000160226" description="NAD-dependent malic enzyme">
    <location>
        <begin position="1"/>
        <end position="563"/>
    </location>
</feature>
<feature type="active site" description="Proton donor" evidence="1">
    <location>
        <position position="101"/>
    </location>
</feature>
<feature type="active site" description="Proton acceptor" evidence="1">
    <location>
        <position position="172"/>
    </location>
</feature>
<feature type="binding site" evidence="1">
    <location>
        <position position="154"/>
    </location>
    <ligand>
        <name>NAD(+)</name>
        <dbReference type="ChEBI" id="CHEBI:57540"/>
    </ligand>
</feature>
<feature type="binding site" evidence="1">
    <location>
        <position position="243"/>
    </location>
    <ligand>
        <name>a divalent metal cation</name>
        <dbReference type="ChEBI" id="CHEBI:60240"/>
    </ligand>
</feature>
<feature type="binding site" evidence="1">
    <location>
        <position position="244"/>
    </location>
    <ligand>
        <name>a divalent metal cation</name>
        <dbReference type="ChEBI" id="CHEBI:60240"/>
    </ligand>
</feature>
<feature type="binding site" evidence="1">
    <location>
        <position position="267"/>
    </location>
    <ligand>
        <name>a divalent metal cation</name>
        <dbReference type="ChEBI" id="CHEBI:60240"/>
    </ligand>
</feature>
<feature type="binding site" evidence="1">
    <location>
        <position position="267"/>
    </location>
    <ligand>
        <name>NAD(+)</name>
        <dbReference type="ChEBI" id="CHEBI:57540"/>
    </ligand>
</feature>
<feature type="binding site" evidence="1">
    <location>
        <position position="416"/>
    </location>
    <ligand>
        <name>NAD(+)</name>
        <dbReference type="ChEBI" id="CHEBI:57540"/>
    </ligand>
</feature>
<feature type="site" description="Important for activity" evidence="1">
    <location>
        <position position="267"/>
    </location>
</feature>
<sequence length="563" mass="62285">MTKTSRPLYISYAGPSLLEMPLLNKGSAFTPQERVEFNLIGLLPQNVETIEEQVTRVYSQYKQCASDLDKHIYLRSIQDNNETLFFRLLDSHLDEMLPIIYTPTVGQACQEFSKIYRTHRGLFISYPERDRIDDILRSATKDRIKIIVVTDSERILGLGDQGIGGMGIPIGKLSLYTACGGISPAYTLPIVLDVGTNNRELLDDPMYMGWRHERVSGKEYEDFIALFIDAVQRRWPDVLLQFEDFAQSNAMPLLEKYRDELCCFNDDIQGTASVAVGTLLAACKAKNETLGQQKVVFVGAGSAGCGIAEHIIAAMRIEGLSESEARKRIFMVDRFGLLTESMDNLLDFQKRLAQKTADVSGWTAGSEAFPQLLDVVTHAGATVMIGVSGQRGLFTEQVIRELHKHCAKPLVMPLSNPTSKVEATPEEILRWTDGNALVATGSPFAPVEINGRTVHIAQCNNSYIFPGIGLGVVACKASRITDRMLMAASNALAECSPMVTGKGDAVLPPLKEIQQVSRKIALAVAREAQAEGLALETTEEALLEAIERNFWLPGYRAYRRRSV</sequence>
<dbReference type="EC" id="1.1.1.38" evidence="1"/>
<dbReference type="EMBL" id="CP000075">
    <property type="protein sequence ID" value="AAY36609.1"/>
    <property type="status" value="ALT_INIT"/>
    <property type="molecule type" value="Genomic_DNA"/>
</dbReference>
<dbReference type="RefSeq" id="WP_003317398.1">
    <property type="nucleotide sequence ID" value="NC_007005.1"/>
</dbReference>
<dbReference type="RefSeq" id="YP_234647.2">
    <property type="nucleotide sequence ID" value="NC_007005.1"/>
</dbReference>
<dbReference type="SMR" id="Q4ZW63"/>
<dbReference type="STRING" id="205918.Psyr_1561"/>
<dbReference type="KEGG" id="psb:Psyr_1561"/>
<dbReference type="PATRIC" id="fig|205918.7.peg.1595"/>
<dbReference type="eggNOG" id="COG0281">
    <property type="taxonomic scope" value="Bacteria"/>
</dbReference>
<dbReference type="HOGENOM" id="CLU_011405_5_2_6"/>
<dbReference type="OrthoDB" id="3314528at2"/>
<dbReference type="Proteomes" id="UP000000426">
    <property type="component" value="Chromosome"/>
</dbReference>
<dbReference type="GO" id="GO:0005829">
    <property type="term" value="C:cytosol"/>
    <property type="evidence" value="ECO:0007669"/>
    <property type="project" value="TreeGrafter"/>
</dbReference>
<dbReference type="GO" id="GO:0004471">
    <property type="term" value="F:malate dehydrogenase (decarboxylating) (NAD+) activity"/>
    <property type="evidence" value="ECO:0007669"/>
    <property type="project" value="UniProtKB-UniRule"/>
</dbReference>
<dbReference type="GO" id="GO:0046872">
    <property type="term" value="F:metal ion binding"/>
    <property type="evidence" value="ECO:0007669"/>
    <property type="project" value="UniProtKB-KW"/>
</dbReference>
<dbReference type="GO" id="GO:0051287">
    <property type="term" value="F:NAD binding"/>
    <property type="evidence" value="ECO:0007669"/>
    <property type="project" value="InterPro"/>
</dbReference>
<dbReference type="GO" id="GO:0008948">
    <property type="term" value="F:oxaloacetate decarboxylase activity"/>
    <property type="evidence" value="ECO:0007669"/>
    <property type="project" value="UniProtKB-UniRule"/>
</dbReference>
<dbReference type="GO" id="GO:0006108">
    <property type="term" value="P:malate metabolic process"/>
    <property type="evidence" value="ECO:0007669"/>
    <property type="project" value="TreeGrafter"/>
</dbReference>
<dbReference type="CDD" id="cd05312">
    <property type="entry name" value="NAD_bind_1_malic_enz"/>
    <property type="match status" value="1"/>
</dbReference>
<dbReference type="FunFam" id="3.40.50.10380:FF:000001">
    <property type="entry name" value="NAD-dependent malic enzyme"/>
    <property type="match status" value="1"/>
</dbReference>
<dbReference type="FunFam" id="3.40.50.720:FF:000055">
    <property type="entry name" value="NAD-dependent malic enzyme"/>
    <property type="match status" value="1"/>
</dbReference>
<dbReference type="Gene3D" id="3.40.50.10380">
    <property type="entry name" value="Malic enzyme, N-terminal domain"/>
    <property type="match status" value="1"/>
</dbReference>
<dbReference type="Gene3D" id="3.40.50.720">
    <property type="entry name" value="NAD(P)-binding Rossmann-like Domain"/>
    <property type="match status" value="1"/>
</dbReference>
<dbReference type="HAMAP" id="MF_01619">
    <property type="entry name" value="NAD_malic_enz"/>
    <property type="match status" value="1"/>
</dbReference>
<dbReference type="InterPro" id="IPR046346">
    <property type="entry name" value="Aminoacid_DH-like_N_sf"/>
</dbReference>
<dbReference type="InterPro" id="IPR015884">
    <property type="entry name" value="Malic_enzyme_CS"/>
</dbReference>
<dbReference type="InterPro" id="IPR012301">
    <property type="entry name" value="Malic_N_dom"/>
</dbReference>
<dbReference type="InterPro" id="IPR037062">
    <property type="entry name" value="Malic_N_dom_sf"/>
</dbReference>
<dbReference type="InterPro" id="IPR012302">
    <property type="entry name" value="Malic_NAD-bd"/>
</dbReference>
<dbReference type="InterPro" id="IPR001891">
    <property type="entry name" value="Malic_OxRdtase"/>
</dbReference>
<dbReference type="InterPro" id="IPR036291">
    <property type="entry name" value="NAD(P)-bd_dom_sf"/>
</dbReference>
<dbReference type="InterPro" id="IPR023667">
    <property type="entry name" value="NAD_malic_enz_proteobac"/>
</dbReference>
<dbReference type="NCBIfam" id="NF010052">
    <property type="entry name" value="PRK13529.1"/>
    <property type="match status" value="1"/>
</dbReference>
<dbReference type="PANTHER" id="PTHR23406">
    <property type="entry name" value="MALIC ENZYME-RELATED"/>
    <property type="match status" value="1"/>
</dbReference>
<dbReference type="PANTHER" id="PTHR23406:SF34">
    <property type="entry name" value="NAD-DEPENDENT MALIC ENZYME, MITOCHONDRIAL"/>
    <property type="match status" value="1"/>
</dbReference>
<dbReference type="Pfam" id="PF00390">
    <property type="entry name" value="malic"/>
    <property type="match status" value="1"/>
</dbReference>
<dbReference type="Pfam" id="PF03949">
    <property type="entry name" value="Malic_M"/>
    <property type="match status" value="1"/>
</dbReference>
<dbReference type="PIRSF" id="PIRSF000106">
    <property type="entry name" value="ME"/>
    <property type="match status" value="1"/>
</dbReference>
<dbReference type="PRINTS" id="PR00072">
    <property type="entry name" value="MALOXRDTASE"/>
</dbReference>
<dbReference type="SMART" id="SM01274">
    <property type="entry name" value="malic"/>
    <property type="match status" value="1"/>
</dbReference>
<dbReference type="SMART" id="SM00919">
    <property type="entry name" value="Malic_M"/>
    <property type="match status" value="1"/>
</dbReference>
<dbReference type="SUPFAM" id="SSF53223">
    <property type="entry name" value="Aminoacid dehydrogenase-like, N-terminal domain"/>
    <property type="match status" value="1"/>
</dbReference>
<dbReference type="SUPFAM" id="SSF51735">
    <property type="entry name" value="NAD(P)-binding Rossmann-fold domains"/>
    <property type="match status" value="1"/>
</dbReference>
<dbReference type="PROSITE" id="PS00331">
    <property type="entry name" value="MALIC_ENZYMES"/>
    <property type="match status" value="1"/>
</dbReference>